<reference key="1">
    <citation type="submission" date="2006-06" db="EMBL/GenBank/DDBJ databases">
        <title>Complete sequence of chromosome of Mesorhizobium sp. BNC1.</title>
        <authorList>
            <consortium name="US DOE Joint Genome Institute"/>
            <person name="Copeland A."/>
            <person name="Lucas S."/>
            <person name="Lapidus A."/>
            <person name="Barry K."/>
            <person name="Detter J.C."/>
            <person name="Glavina del Rio T."/>
            <person name="Hammon N."/>
            <person name="Israni S."/>
            <person name="Dalin E."/>
            <person name="Tice H."/>
            <person name="Pitluck S."/>
            <person name="Chertkov O."/>
            <person name="Brettin T."/>
            <person name="Bruce D."/>
            <person name="Han C."/>
            <person name="Tapia R."/>
            <person name="Gilna P."/>
            <person name="Schmutz J."/>
            <person name="Larimer F."/>
            <person name="Land M."/>
            <person name="Hauser L."/>
            <person name="Kyrpides N."/>
            <person name="Mikhailova N."/>
            <person name="Richardson P."/>
        </authorList>
    </citation>
    <scope>NUCLEOTIDE SEQUENCE [LARGE SCALE GENOMIC DNA]</scope>
    <source>
        <strain>BNC1</strain>
    </source>
</reference>
<organism>
    <name type="scientific">Chelativorans sp. (strain BNC1)</name>
    <dbReference type="NCBI Taxonomy" id="266779"/>
    <lineage>
        <taxon>Bacteria</taxon>
        <taxon>Pseudomonadati</taxon>
        <taxon>Pseudomonadota</taxon>
        <taxon>Alphaproteobacteria</taxon>
        <taxon>Hyphomicrobiales</taxon>
        <taxon>Phyllobacteriaceae</taxon>
        <taxon>Chelativorans</taxon>
    </lineage>
</organism>
<comment type="function">
    <text evidence="1">Promotes RNA polymerase assembly. Latches the N- and C-terminal regions of the beta' subunit thereby facilitating its interaction with the beta and alpha subunits.</text>
</comment>
<comment type="catalytic activity">
    <reaction evidence="1">
        <text>RNA(n) + a ribonucleoside 5'-triphosphate = RNA(n+1) + diphosphate</text>
        <dbReference type="Rhea" id="RHEA:21248"/>
        <dbReference type="Rhea" id="RHEA-COMP:14527"/>
        <dbReference type="Rhea" id="RHEA-COMP:17342"/>
        <dbReference type="ChEBI" id="CHEBI:33019"/>
        <dbReference type="ChEBI" id="CHEBI:61557"/>
        <dbReference type="ChEBI" id="CHEBI:140395"/>
        <dbReference type="EC" id="2.7.7.6"/>
    </reaction>
</comment>
<comment type="subunit">
    <text evidence="1">The RNAP catalytic core consists of 2 alpha, 1 beta, 1 beta' and 1 omega subunit. When a sigma factor is associated with the core the holoenzyme is formed, which can initiate transcription.</text>
</comment>
<comment type="similarity">
    <text evidence="1">Belongs to the RNA polymerase subunit omega family.</text>
</comment>
<proteinExistence type="inferred from homology"/>
<sequence>MARVTVEDCIDKVENRFDLVLLASHRARQISQGEQITIDRDNDKNPVVALREIADETLSPGDLKEALIHSLQKHVEVDEPEADLPQIASQAEETPDAELAPEENIAFDRMSEEELLAGIEGLVPPEKNDDF</sequence>
<keyword id="KW-0240">DNA-directed RNA polymerase</keyword>
<keyword id="KW-0548">Nucleotidyltransferase</keyword>
<keyword id="KW-0804">Transcription</keyword>
<keyword id="KW-0808">Transferase</keyword>
<name>RPOZ_CHESB</name>
<feature type="chain" id="PRO_1000005955" description="DNA-directed RNA polymerase subunit omega">
    <location>
        <begin position="1"/>
        <end position="131"/>
    </location>
</feature>
<gene>
    <name evidence="1" type="primary">rpoZ</name>
    <name type="ordered locus">Meso_0945</name>
</gene>
<protein>
    <recommendedName>
        <fullName evidence="1">DNA-directed RNA polymerase subunit omega</fullName>
        <shortName evidence="1">RNAP omega subunit</shortName>
        <ecNumber evidence="1">2.7.7.6</ecNumber>
    </recommendedName>
    <alternativeName>
        <fullName evidence="1">RNA polymerase omega subunit</fullName>
    </alternativeName>
    <alternativeName>
        <fullName evidence="1">Transcriptase subunit omega</fullName>
    </alternativeName>
</protein>
<dbReference type="EC" id="2.7.7.6" evidence="1"/>
<dbReference type="EMBL" id="CP000390">
    <property type="protein sequence ID" value="ABG62342.1"/>
    <property type="molecule type" value="Genomic_DNA"/>
</dbReference>
<dbReference type="SMR" id="Q11JT3"/>
<dbReference type="STRING" id="266779.Meso_0945"/>
<dbReference type="KEGG" id="mes:Meso_0945"/>
<dbReference type="eggNOG" id="COG1758">
    <property type="taxonomic scope" value="Bacteria"/>
</dbReference>
<dbReference type="HOGENOM" id="CLU_125406_2_0_5"/>
<dbReference type="OrthoDB" id="9796300at2"/>
<dbReference type="GO" id="GO:0000428">
    <property type="term" value="C:DNA-directed RNA polymerase complex"/>
    <property type="evidence" value="ECO:0007669"/>
    <property type="project" value="UniProtKB-KW"/>
</dbReference>
<dbReference type="GO" id="GO:0003677">
    <property type="term" value="F:DNA binding"/>
    <property type="evidence" value="ECO:0007669"/>
    <property type="project" value="UniProtKB-UniRule"/>
</dbReference>
<dbReference type="GO" id="GO:0003899">
    <property type="term" value="F:DNA-directed RNA polymerase activity"/>
    <property type="evidence" value="ECO:0007669"/>
    <property type="project" value="UniProtKB-UniRule"/>
</dbReference>
<dbReference type="GO" id="GO:0006351">
    <property type="term" value="P:DNA-templated transcription"/>
    <property type="evidence" value="ECO:0007669"/>
    <property type="project" value="UniProtKB-UniRule"/>
</dbReference>
<dbReference type="Gene3D" id="3.90.940.10">
    <property type="match status" value="1"/>
</dbReference>
<dbReference type="HAMAP" id="MF_00366">
    <property type="entry name" value="RNApol_bact_RpoZ"/>
    <property type="match status" value="1"/>
</dbReference>
<dbReference type="InterPro" id="IPR003716">
    <property type="entry name" value="DNA-dir_RNA_pol_omega"/>
</dbReference>
<dbReference type="InterPro" id="IPR006110">
    <property type="entry name" value="Pol_omega/Rpo6/RPB6"/>
</dbReference>
<dbReference type="InterPro" id="IPR036161">
    <property type="entry name" value="RPB6/omega-like_sf"/>
</dbReference>
<dbReference type="NCBIfam" id="TIGR00690">
    <property type="entry name" value="rpoZ"/>
    <property type="match status" value="1"/>
</dbReference>
<dbReference type="PANTHER" id="PTHR34476">
    <property type="entry name" value="DNA-DIRECTED RNA POLYMERASE SUBUNIT OMEGA"/>
    <property type="match status" value="1"/>
</dbReference>
<dbReference type="PANTHER" id="PTHR34476:SF1">
    <property type="entry name" value="DNA-DIRECTED RNA POLYMERASE SUBUNIT OMEGA"/>
    <property type="match status" value="1"/>
</dbReference>
<dbReference type="Pfam" id="PF01192">
    <property type="entry name" value="RNA_pol_Rpb6"/>
    <property type="match status" value="1"/>
</dbReference>
<dbReference type="SMART" id="SM01409">
    <property type="entry name" value="RNA_pol_Rpb6"/>
    <property type="match status" value="1"/>
</dbReference>
<dbReference type="SUPFAM" id="SSF63562">
    <property type="entry name" value="RPB6/omega subunit-like"/>
    <property type="match status" value="1"/>
</dbReference>
<accession>Q11JT3</accession>
<evidence type="ECO:0000255" key="1">
    <source>
        <dbReference type="HAMAP-Rule" id="MF_00366"/>
    </source>
</evidence>